<keyword id="KW-0067">ATP-binding</keyword>
<keyword id="KW-0963">Cytoplasm</keyword>
<keyword id="KW-0275">Fatty acid biosynthesis</keyword>
<keyword id="KW-0276">Fatty acid metabolism</keyword>
<keyword id="KW-0444">Lipid biosynthesis</keyword>
<keyword id="KW-0443">Lipid metabolism</keyword>
<keyword id="KW-0479">Metal-binding</keyword>
<keyword id="KW-0547">Nucleotide-binding</keyword>
<keyword id="KW-0808">Transferase</keyword>
<keyword id="KW-0862">Zinc</keyword>
<keyword id="KW-0863">Zinc-finger</keyword>
<accession>Q92BE2</accession>
<name>ACCD_LISIN</name>
<reference key="1">
    <citation type="journal article" date="2001" name="Science">
        <title>Comparative genomics of Listeria species.</title>
        <authorList>
            <person name="Glaser P."/>
            <person name="Frangeul L."/>
            <person name="Buchrieser C."/>
            <person name="Rusniok C."/>
            <person name="Amend A."/>
            <person name="Baquero F."/>
            <person name="Berche P."/>
            <person name="Bloecker H."/>
            <person name="Brandt P."/>
            <person name="Chakraborty T."/>
            <person name="Charbit A."/>
            <person name="Chetouani F."/>
            <person name="Couve E."/>
            <person name="de Daruvar A."/>
            <person name="Dehoux P."/>
            <person name="Domann E."/>
            <person name="Dominguez-Bernal G."/>
            <person name="Duchaud E."/>
            <person name="Durant L."/>
            <person name="Dussurget O."/>
            <person name="Entian K.-D."/>
            <person name="Fsihi H."/>
            <person name="Garcia-del Portillo F."/>
            <person name="Garrido P."/>
            <person name="Gautier L."/>
            <person name="Goebel W."/>
            <person name="Gomez-Lopez N."/>
            <person name="Hain T."/>
            <person name="Hauf J."/>
            <person name="Jackson D."/>
            <person name="Jones L.-M."/>
            <person name="Kaerst U."/>
            <person name="Kreft J."/>
            <person name="Kuhn M."/>
            <person name="Kunst F."/>
            <person name="Kurapkat G."/>
            <person name="Madueno E."/>
            <person name="Maitournam A."/>
            <person name="Mata Vicente J."/>
            <person name="Ng E."/>
            <person name="Nedjari H."/>
            <person name="Nordsiek G."/>
            <person name="Novella S."/>
            <person name="de Pablos B."/>
            <person name="Perez-Diaz J.-C."/>
            <person name="Purcell R."/>
            <person name="Remmel B."/>
            <person name="Rose M."/>
            <person name="Schlueter T."/>
            <person name="Simoes N."/>
            <person name="Tierrez A."/>
            <person name="Vazquez-Boland J.-A."/>
            <person name="Voss H."/>
            <person name="Wehland J."/>
            <person name="Cossart P."/>
        </authorList>
    </citation>
    <scope>NUCLEOTIDE SEQUENCE [LARGE SCALE GENOMIC DNA]</scope>
    <source>
        <strain>ATCC BAA-680 / CLIP 11262</strain>
    </source>
</reference>
<feature type="chain" id="PRO_0000389781" description="Acetyl-coenzyme A carboxylase carboxyl transferase subunit beta">
    <location>
        <begin position="1"/>
        <end position="294"/>
    </location>
</feature>
<feature type="domain" description="CoA carboxyltransferase N-terminal" evidence="2">
    <location>
        <begin position="30"/>
        <end position="294"/>
    </location>
</feature>
<feature type="zinc finger region" description="C4-type" evidence="1">
    <location>
        <begin position="34"/>
        <end position="56"/>
    </location>
</feature>
<feature type="binding site" evidence="1">
    <location>
        <position position="34"/>
    </location>
    <ligand>
        <name>Zn(2+)</name>
        <dbReference type="ChEBI" id="CHEBI:29105"/>
    </ligand>
</feature>
<feature type="binding site" evidence="1">
    <location>
        <position position="37"/>
    </location>
    <ligand>
        <name>Zn(2+)</name>
        <dbReference type="ChEBI" id="CHEBI:29105"/>
    </ligand>
</feature>
<feature type="binding site" evidence="1">
    <location>
        <position position="53"/>
    </location>
    <ligand>
        <name>Zn(2+)</name>
        <dbReference type="ChEBI" id="CHEBI:29105"/>
    </ligand>
</feature>
<feature type="binding site" evidence="1">
    <location>
        <position position="56"/>
    </location>
    <ligand>
        <name>Zn(2+)</name>
        <dbReference type="ChEBI" id="CHEBI:29105"/>
    </ligand>
</feature>
<dbReference type="EC" id="2.1.3.15" evidence="1"/>
<dbReference type="EMBL" id="AL596169">
    <property type="protein sequence ID" value="CAC96839.1"/>
    <property type="molecule type" value="Genomic_DNA"/>
</dbReference>
<dbReference type="PIR" id="AG1633">
    <property type="entry name" value="AG1633"/>
</dbReference>
<dbReference type="RefSeq" id="WP_010991609.1">
    <property type="nucleotide sequence ID" value="NC_003212.1"/>
</dbReference>
<dbReference type="SMR" id="Q92BE2"/>
<dbReference type="STRING" id="272626.gene:17565939"/>
<dbReference type="GeneID" id="93234990"/>
<dbReference type="KEGG" id="lin:accD"/>
<dbReference type="eggNOG" id="COG0777">
    <property type="taxonomic scope" value="Bacteria"/>
</dbReference>
<dbReference type="HOGENOM" id="CLU_015486_1_1_9"/>
<dbReference type="OrthoDB" id="9772975at2"/>
<dbReference type="UniPathway" id="UPA00655">
    <property type="reaction ID" value="UER00711"/>
</dbReference>
<dbReference type="Proteomes" id="UP000002513">
    <property type="component" value="Chromosome"/>
</dbReference>
<dbReference type="GO" id="GO:0009317">
    <property type="term" value="C:acetyl-CoA carboxylase complex"/>
    <property type="evidence" value="ECO:0007669"/>
    <property type="project" value="InterPro"/>
</dbReference>
<dbReference type="GO" id="GO:0003989">
    <property type="term" value="F:acetyl-CoA carboxylase activity"/>
    <property type="evidence" value="ECO:0007669"/>
    <property type="project" value="InterPro"/>
</dbReference>
<dbReference type="GO" id="GO:0005524">
    <property type="term" value="F:ATP binding"/>
    <property type="evidence" value="ECO:0007669"/>
    <property type="project" value="UniProtKB-KW"/>
</dbReference>
<dbReference type="GO" id="GO:0016743">
    <property type="term" value="F:carboxyl- or carbamoyltransferase activity"/>
    <property type="evidence" value="ECO:0007669"/>
    <property type="project" value="UniProtKB-UniRule"/>
</dbReference>
<dbReference type="GO" id="GO:0008270">
    <property type="term" value="F:zinc ion binding"/>
    <property type="evidence" value="ECO:0007669"/>
    <property type="project" value="UniProtKB-UniRule"/>
</dbReference>
<dbReference type="GO" id="GO:0006633">
    <property type="term" value="P:fatty acid biosynthetic process"/>
    <property type="evidence" value="ECO:0007669"/>
    <property type="project" value="UniProtKB-KW"/>
</dbReference>
<dbReference type="GO" id="GO:2001295">
    <property type="term" value="P:malonyl-CoA biosynthetic process"/>
    <property type="evidence" value="ECO:0007669"/>
    <property type="project" value="UniProtKB-UniRule"/>
</dbReference>
<dbReference type="Gene3D" id="3.90.226.10">
    <property type="entry name" value="2-enoyl-CoA Hydratase, Chain A, domain 1"/>
    <property type="match status" value="1"/>
</dbReference>
<dbReference type="HAMAP" id="MF_01395">
    <property type="entry name" value="AcetylCoA_CT_beta"/>
    <property type="match status" value="1"/>
</dbReference>
<dbReference type="InterPro" id="IPR034733">
    <property type="entry name" value="AcCoA_carboxyl_beta"/>
</dbReference>
<dbReference type="InterPro" id="IPR000438">
    <property type="entry name" value="Acetyl_CoA_COase_Trfase_b_su"/>
</dbReference>
<dbReference type="InterPro" id="IPR029045">
    <property type="entry name" value="ClpP/crotonase-like_dom_sf"/>
</dbReference>
<dbReference type="InterPro" id="IPR011762">
    <property type="entry name" value="COA_CT_N"/>
</dbReference>
<dbReference type="InterPro" id="IPR041010">
    <property type="entry name" value="Znf-ACC"/>
</dbReference>
<dbReference type="NCBIfam" id="TIGR00515">
    <property type="entry name" value="accD"/>
    <property type="match status" value="1"/>
</dbReference>
<dbReference type="PANTHER" id="PTHR42995">
    <property type="entry name" value="ACETYL-COENZYME A CARBOXYLASE CARBOXYL TRANSFERASE SUBUNIT BETA, CHLOROPLASTIC"/>
    <property type="match status" value="1"/>
</dbReference>
<dbReference type="PANTHER" id="PTHR42995:SF5">
    <property type="entry name" value="ACETYL-COENZYME A CARBOXYLASE CARBOXYL TRANSFERASE SUBUNIT BETA, CHLOROPLASTIC"/>
    <property type="match status" value="1"/>
</dbReference>
<dbReference type="Pfam" id="PF01039">
    <property type="entry name" value="Carboxyl_trans"/>
    <property type="match status" value="1"/>
</dbReference>
<dbReference type="Pfam" id="PF17848">
    <property type="entry name" value="Zn_ribbon_ACC"/>
    <property type="match status" value="1"/>
</dbReference>
<dbReference type="PRINTS" id="PR01070">
    <property type="entry name" value="ACCCTRFRASEB"/>
</dbReference>
<dbReference type="SUPFAM" id="SSF52096">
    <property type="entry name" value="ClpP/crotonase"/>
    <property type="match status" value="1"/>
</dbReference>
<dbReference type="PROSITE" id="PS50980">
    <property type="entry name" value="COA_CT_NTER"/>
    <property type="match status" value="1"/>
</dbReference>
<proteinExistence type="inferred from homology"/>
<comment type="function">
    <text evidence="1">Component of the acetyl coenzyme A carboxylase (ACC) complex. Biotin carboxylase (BC) catalyzes the carboxylation of biotin on its carrier protein (BCCP) and then the CO(2) group is transferred by the transcarboxylase to acetyl-CoA to form malonyl-CoA.</text>
</comment>
<comment type="catalytic activity">
    <reaction evidence="1">
        <text>N(6)-carboxybiotinyl-L-lysyl-[protein] + acetyl-CoA = N(6)-biotinyl-L-lysyl-[protein] + malonyl-CoA</text>
        <dbReference type="Rhea" id="RHEA:54728"/>
        <dbReference type="Rhea" id="RHEA-COMP:10505"/>
        <dbReference type="Rhea" id="RHEA-COMP:10506"/>
        <dbReference type="ChEBI" id="CHEBI:57288"/>
        <dbReference type="ChEBI" id="CHEBI:57384"/>
        <dbReference type="ChEBI" id="CHEBI:83144"/>
        <dbReference type="ChEBI" id="CHEBI:83145"/>
        <dbReference type="EC" id="2.1.3.15"/>
    </reaction>
</comment>
<comment type="cofactor">
    <cofactor evidence="1">
        <name>Zn(2+)</name>
        <dbReference type="ChEBI" id="CHEBI:29105"/>
    </cofactor>
    <text evidence="1">Binds 1 zinc ion per subunit.</text>
</comment>
<comment type="pathway">
    <text evidence="1">Lipid metabolism; malonyl-CoA biosynthesis; malonyl-CoA from acetyl-CoA: step 1/1.</text>
</comment>
<comment type="subunit">
    <text evidence="1">Acetyl-CoA carboxylase is a heterohexamer composed of biotin carboxyl carrier protein (AccB), biotin carboxylase (AccC) and two subunits each of ACCase subunit alpha (AccA) and ACCase subunit beta (AccD).</text>
</comment>
<comment type="subcellular location">
    <subcellularLocation>
        <location evidence="1">Cytoplasm</location>
    </subcellularLocation>
</comment>
<comment type="similarity">
    <text evidence="1">Belongs to the AccD/PCCB family.</text>
</comment>
<evidence type="ECO:0000255" key="1">
    <source>
        <dbReference type="HAMAP-Rule" id="MF_01395"/>
    </source>
</evidence>
<evidence type="ECO:0000255" key="2">
    <source>
        <dbReference type="PROSITE-ProRule" id="PRU01136"/>
    </source>
</evidence>
<protein>
    <recommendedName>
        <fullName evidence="1">Acetyl-coenzyme A carboxylase carboxyl transferase subunit beta</fullName>
        <shortName evidence="1">ACCase subunit beta</shortName>
        <shortName evidence="1">Acetyl-CoA carboxylase carboxyltransferase subunit beta</shortName>
        <ecNumber evidence="1">2.1.3.15</ecNumber>
    </recommendedName>
</protein>
<organism>
    <name type="scientific">Listeria innocua serovar 6a (strain ATCC BAA-680 / CLIP 11262)</name>
    <dbReference type="NCBI Taxonomy" id="272626"/>
    <lineage>
        <taxon>Bacteria</taxon>
        <taxon>Bacillati</taxon>
        <taxon>Bacillota</taxon>
        <taxon>Bacilli</taxon>
        <taxon>Bacillales</taxon>
        <taxon>Listeriaceae</taxon>
        <taxon>Listeria</taxon>
    </lineage>
</organism>
<sequence>MLGDLFTKPKKRKYATIPSDGTKADVPEGIMTKCPECKKIMYTKELQKNLMVCNYCGFHHPIGATARIDMLVDEGSFEELDANLTTANPLGFENYMDRIEKDKQKSGLNEAIVTGHATIDGNPLVIAVMDSRFRMASMGSVVGEKILRGVEEADKTNKPFVIFTASGGARMQEGMLSLMQMAKTSAAFKRFSNHGGLVITVMTHPTTGGVSASFASLGDYNFAEPGALIGFAGRRVIEQTVREELPEDFQTAEFLLKHGQLDDCISRLDLKNKLSFILKIHVKTPEAGGESDGE</sequence>
<gene>
    <name evidence="1" type="primary">accD</name>
    <name type="ordered locus">lin1608</name>
</gene>